<proteinExistence type="inferred from homology"/>
<accession>O33149</accession>
<name>GYRA_MYCMA</name>
<keyword id="KW-0067">ATP-binding</keyword>
<keyword id="KW-0068">Autocatalytic cleavage</keyword>
<keyword id="KW-0963">Cytoplasm</keyword>
<keyword id="KW-0238">DNA-binding</keyword>
<keyword id="KW-0255">Endonuclease</keyword>
<keyword id="KW-0378">Hydrolase</keyword>
<keyword id="KW-0404">Intron homing</keyword>
<keyword id="KW-0413">Isomerase</keyword>
<keyword id="KW-0540">Nuclease</keyword>
<keyword id="KW-0547">Nucleotide-binding</keyword>
<keyword id="KW-0651">Protein splicing</keyword>
<keyword id="KW-0799">Topoisomerase</keyword>
<organism>
    <name type="scientific">Mycobacterium malmoense</name>
    <dbReference type="NCBI Taxonomy" id="1780"/>
    <lineage>
        <taxon>Bacteria</taxon>
        <taxon>Bacillati</taxon>
        <taxon>Actinomycetota</taxon>
        <taxon>Actinomycetes</taxon>
        <taxon>Mycobacteriales</taxon>
        <taxon>Mycobacteriaceae</taxon>
        <taxon>Mycobacterium</taxon>
    </lineage>
</organism>
<feature type="chain" id="PRO_0000034810" description="DNA gyrase subunit A, 1st part" evidence="2">
    <location>
        <begin position="1"/>
        <end position="49"/>
    </location>
</feature>
<feature type="chain" id="PRO_0000034811" description="Mma GyrA intein" evidence="1">
    <location>
        <begin position="50"/>
        <end position="469"/>
    </location>
</feature>
<feature type="chain" id="PRO_0000034812" description="DNA gyrase subunit A, 2nd part" evidence="1">
    <location>
        <begin position="470"/>
        <end position="473" status="greater than"/>
    </location>
</feature>
<feature type="domain" description="Topo IIA-type catalytic" evidence="4">
    <location>
        <begin position="1"/>
        <end position="473"/>
    </location>
</feature>
<feature type="domain" description="DOD-type homing endonuclease" evidence="3">
    <location>
        <begin position="175"/>
        <end position="315"/>
    </location>
</feature>
<feature type="active site" description="O-(5'-phospho-DNA)-tyrosine intermediate" evidence="4">
    <location>
        <position position="49"/>
    </location>
</feature>
<feature type="non-terminal residue">
    <location>
        <position position="473"/>
    </location>
</feature>
<comment type="function">
    <text evidence="2">A type II topoisomerase that negatively supercoils closed circular double-stranded (ds) DNA in an ATP-dependent manner to modulate DNA topology and maintain chromosomes in an underwound state. Negative supercoiling favors strand separation, and DNA replication, transcription, recombination and repair, all of which involve strand separation. Also able to catalyze the interconversion of other topological isomers of dsDNA rings, including catenanes and knotted rings. Type II topoisomerases break and join 2 DNA strands simultaneously in an ATP-dependent manner.</text>
</comment>
<comment type="catalytic activity">
    <reaction evidence="4">
        <text>ATP-dependent breakage, passage and rejoining of double-stranded DNA.</text>
        <dbReference type="EC" id="5.6.2.2"/>
    </reaction>
</comment>
<comment type="subunit">
    <text evidence="2">Heterotetramer, composed of two GyrA and two GyrB chains. In the heterotetramer, GyrA contains the active site tyrosine that forms a transient covalent intermediate with DNA, while GyrB binds cofactors and catalyzes ATP hydrolysis.</text>
</comment>
<comment type="subcellular location">
    <subcellularLocation>
        <location evidence="2">Cytoplasm</location>
    </subcellularLocation>
</comment>
<comment type="PTM">
    <text evidence="1">This protein undergoes a protein self splicing that involves a post-translational excision of the intervening region (intein) followed by peptide ligation.</text>
</comment>
<comment type="miscellaneous">
    <text evidence="2">Few gyrases are as efficient as E.coli at forming negative supercoils. Not all organisms have 2 type II topoisomerases; in organisms with a single type II topoisomerase this enzyme also has to decatenate newly replicated chromosomes.</text>
</comment>
<comment type="similarity">
    <text>Belongs to the type II topoisomerase GyrA/ParC subunit family.</text>
</comment>
<gene>
    <name type="primary">gyrA</name>
</gene>
<reference key="1">
    <citation type="journal article" date="1998" name="Microbiology">
        <title>Inteins in mycobacterial GyrA are a taxonomic character.</title>
        <authorList>
            <person name="Sander P."/>
            <person name="Alcaide F."/>
            <person name="Richter I."/>
            <person name="Frischkorn K."/>
            <person name="Tortoli E."/>
            <person name="Springer B."/>
            <person name="Telenti A."/>
            <person name="Boettger E.C."/>
        </authorList>
    </citation>
    <scope>NUCLEOTIDE SEQUENCE [GENOMIC DNA]</scope>
</reference>
<protein>
    <recommendedName>
        <fullName>DNA gyrase subunit A</fullName>
        <ecNumber evidence="4">5.6.2.2</ecNumber>
    </recommendedName>
    <component>
        <recommendedName>
            <fullName>Mma GyrA intein</fullName>
        </recommendedName>
    </component>
</protein>
<evidence type="ECO:0000250" key="1"/>
<evidence type="ECO:0000250" key="2">
    <source>
        <dbReference type="UniProtKB" id="P0AES4"/>
    </source>
</evidence>
<evidence type="ECO:0000255" key="3">
    <source>
        <dbReference type="PROSITE-ProRule" id="PRU00273"/>
    </source>
</evidence>
<evidence type="ECO:0000255" key="4">
    <source>
        <dbReference type="PROSITE-ProRule" id="PRU01384"/>
    </source>
</evidence>
<sequence>MGNYHPHGNASIYNTLVRMAQPWSLRYPLVNGQGNFGSPGNNPPAAMRYCCTGDALVRLPFGHSVRIGNFVPAACPNSDNAVNLKVLDRHGDPVVADQLFHSGEHQTYTVRTAEGYEVTGTSNHPLLCLVDVGGVPTLLWKLIEEIRPDDHVVLQRTPPVEFGPADWHDVMEALLLGAFISEGFVSEVRAGFNNCDRDYFAMVVGAYDAVVGGRRYVSSRRIASGSTLHELDIQNIKELKEARLGDLCGQRPADKSVPDWLWHSPAAVKRVFLQALFEGGGSCSALPRNMIQISYSTRSRQLAVDVQQMLLEFGIITRRYRHAVGEHKVLITNRAQAELFATRVGFGGAKQEKLTKILGSMPPCAGMDSDHVPGLARFIRKHCGSRWVDKDWLNRHNVDRIQRWRTSGEKILSHIADPDVRAIATDLTDGRFYYAKVASVTEAGVQPVYSLRVDTDEHAFLTNGFVSHNTEAR</sequence>
<dbReference type="EC" id="5.6.2.2" evidence="4"/>
<dbReference type="EMBL" id="AJ002066">
    <property type="protein sequence ID" value="CAA05167.1"/>
    <property type="molecule type" value="Genomic_DNA"/>
</dbReference>
<dbReference type="SMR" id="O33149"/>
<dbReference type="STRING" id="1780.A5676_24970"/>
<dbReference type="GO" id="GO:0005737">
    <property type="term" value="C:cytoplasm"/>
    <property type="evidence" value="ECO:0007669"/>
    <property type="project" value="UniProtKB-SubCell"/>
</dbReference>
<dbReference type="GO" id="GO:0009330">
    <property type="term" value="C:DNA topoisomerase type II (double strand cut, ATP-hydrolyzing) complex"/>
    <property type="evidence" value="ECO:0007669"/>
    <property type="project" value="TreeGrafter"/>
</dbReference>
<dbReference type="GO" id="GO:0005524">
    <property type="term" value="F:ATP binding"/>
    <property type="evidence" value="ECO:0007669"/>
    <property type="project" value="UniProtKB-KW"/>
</dbReference>
<dbReference type="GO" id="GO:0003677">
    <property type="term" value="F:DNA binding"/>
    <property type="evidence" value="ECO:0007669"/>
    <property type="project" value="UniProtKB-KW"/>
</dbReference>
<dbReference type="GO" id="GO:0034335">
    <property type="term" value="F:DNA negative supercoiling activity"/>
    <property type="evidence" value="ECO:0007669"/>
    <property type="project" value="UniProtKB-ARBA"/>
</dbReference>
<dbReference type="GO" id="GO:0004519">
    <property type="term" value="F:endonuclease activity"/>
    <property type="evidence" value="ECO:0007669"/>
    <property type="project" value="UniProtKB-KW"/>
</dbReference>
<dbReference type="GO" id="GO:0006265">
    <property type="term" value="P:DNA topological change"/>
    <property type="evidence" value="ECO:0007669"/>
    <property type="project" value="InterPro"/>
</dbReference>
<dbReference type="GO" id="GO:0016539">
    <property type="term" value="P:intein-mediated protein splicing"/>
    <property type="evidence" value="ECO:0007669"/>
    <property type="project" value="InterPro"/>
</dbReference>
<dbReference type="GO" id="GO:0006314">
    <property type="term" value="P:intron homing"/>
    <property type="evidence" value="ECO:0007669"/>
    <property type="project" value="UniProtKB-KW"/>
</dbReference>
<dbReference type="CDD" id="cd00081">
    <property type="entry name" value="Hint"/>
    <property type="match status" value="1"/>
</dbReference>
<dbReference type="Gene3D" id="2.170.16.10">
    <property type="entry name" value="Hedgehog/Intein (Hint) domain"/>
    <property type="match status" value="2"/>
</dbReference>
<dbReference type="Gene3D" id="3.10.28.10">
    <property type="entry name" value="Homing endonucleases"/>
    <property type="match status" value="1"/>
</dbReference>
<dbReference type="Gene3D" id="3.90.199.10">
    <property type="entry name" value="Topoisomerase II, domain 5"/>
    <property type="match status" value="1"/>
</dbReference>
<dbReference type="InterPro" id="IPR003586">
    <property type="entry name" value="Hint_dom_C"/>
</dbReference>
<dbReference type="InterPro" id="IPR003587">
    <property type="entry name" value="Hint_dom_N"/>
</dbReference>
<dbReference type="InterPro" id="IPR036844">
    <property type="entry name" value="Hint_dom_sf"/>
</dbReference>
<dbReference type="InterPro" id="IPR027434">
    <property type="entry name" value="Homing_endonucl"/>
</dbReference>
<dbReference type="InterPro" id="IPR006142">
    <property type="entry name" value="INTEIN"/>
</dbReference>
<dbReference type="InterPro" id="IPR030934">
    <property type="entry name" value="Intein_C"/>
</dbReference>
<dbReference type="InterPro" id="IPR004042">
    <property type="entry name" value="Intein_endonuc_central"/>
</dbReference>
<dbReference type="InterPro" id="IPR006141">
    <property type="entry name" value="Intein_N"/>
</dbReference>
<dbReference type="InterPro" id="IPR004860">
    <property type="entry name" value="LAGLIDADG_dom"/>
</dbReference>
<dbReference type="InterPro" id="IPR013760">
    <property type="entry name" value="Topo_IIA-like_dom_sf"/>
</dbReference>
<dbReference type="InterPro" id="IPR013758">
    <property type="entry name" value="Topo_IIA_A/C_ab"/>
</dbReference>
<dbReference type="InterPro" id="IPR002205">
    <property type="entry name" value="Topo_IIA_dom_A"/>
</dbReference>
<dbReference type="InterPro" id="IPR050220">
    <property type="entry name" value="Type_II_DNA_Topoisomerases"/>
</dbReference>
<dbReference type="NCBIfam" id="TIGR01443">
    <property type="entry name" value="intein_Cterm"/>
    <property type="match status" value="1"/>
</dbReference>
<dbReference type="NCBIfam" id="TIGR01445">
    <property type="entry name" value="intein_Nterm"/>
    <property type="match status" value="1"/>
</dbReference>
<dbReference type="PANTHER" id="PTHR43493:SF5">
    <property type="entry name" value="DNA GYRASE SUBUNIT A, CHLOROPLASTIC_MITOCHONDRIAL"/>
    <property type="match status" value="1"/>
</dbReference>
<dbReference type="PANTHER" id="PTHR43493">
    <property type="entry name" value="DNA GYRASE/TOPOISOMERASE SUBUNIT A"/>
    <property type="match status" value="1"/>
</dbReference>
<dbReference type="Pfam" id="PF00521">
    <property type="entry name" value="DNA_topoisoIV"/>
    <property type="match status" value="1"/>
</dbReference>
<dbReference type="Pfam" id="PF14890">
    <property type="entry name" value="Intein_splicing"/>
    <property type="match status" value="1"/>
</dbReference>
<dbReference type="Pfam" id="PF14528">
    <property type="entry name" value="LAGLIDADG_3"/>
    <property type="match status" value="1"/>
</dbReference>
<dbReference type="PRINTS" id="PR00379">
    <property type="entry name" value="INTEIN"/>
</dbReference>
<dbReference type="SMART" id="SM00305">
    <property type="entry name" value="HintC"/>
    <property type="match status" value="1"/>
</dbReference>
<dbReference type="SMART" id="SM00306">
    <property type="entry name" value="HintN"/>
    <property type="match status" value="1"/>
</dbReference>
<dbReference type="SUPFAM" id="SSF51294">
    <property type="entry name" value="Hedgehog/intein (Hint) domain"/>
    <property type="match status" value="1"/>
</dbReference>
<dbReference type="SUPFAM" id="SSF55608">
    <property type="entry name" value="Homing endonucleases"/>
    <property type="match status" value="1"/>
</dbReference>
<dbReference type="SUPFAM" id="SSF56719">
    <property type="entry name" value="Type II DNA topoisomerase"/>
    <property type="match status" value="1"/>
</dbReference>
<dbReference type="PROSITE" id="PS50818">
    <property type="entry name" value="INTEIN_C_TER"/>
    <property type="match status" value="1"/>
</dbReference>
<dbReference type="PROSITE" id="PS50819">
    <property type="entry name" value="INTEIN_ENDONUCLEASE"/>
    <property type="match status" value="1"/>
</dbReference>
<dbReference type="PROSITE" id="PS50817">
    <property type="entry name" value="INTEIN_N_TER"/>
    <property type="match status" value="1"/>
</dbReference>
<dbReference type="PROSITE" id="PS52040">
    <property type="entry name" value="TOPO_IIA"/>
    <property type="match status" value="1"/>
</dbReference>